<reference key="1">
    <citation type="journal article" date="2005" name="J. Bacteriol.">
        <title>Complete genome sequence and analysis of the multiresistant nosocomial pathogen Corynebacterium jeikeium K411, a lipid-requiring bacterium of the human skin flora.</title>
        <authorList>
            <person name="Tauch A."/>
            <person name="Kaiser O."/>
            <person name="Hain T."/>
            <person name="Goesmann A."/>
            <person name="Weisshaar B."/>
            <person name="Albersmeier A."/>
            <person name="Bekel T."/>
            <person name="Bischoff N."/>
            <person name="Brune I."/>
            <person name="Chakraborty T."/>
            <person name="Kalinowski J."/>
            <person name="Meyer F."/>
            <person name="Rupp O."/>
            <person name="Schneiker S."/>
            <person name="Viehoever P."/>
            <person name="Puehler A."/>
        </authorList>
    </citation>
    <scope>NUCLEOTIDE SEQUENCE [LARGE SCALE GENOMIC DNA]</scope>
    <source>
        <strain>K411</strain>
    </source>
</reference>
<gene>
    <name evidence="1" type="primary">gcvH</name>
    <name type="ordered locus">jk0211</name>
</gene>
<protein>
    <recommendedName>
        <fullName evidence="1">Glycine cleavage system H protein</fullName>
    </recommendedName>
</protein>
<accession>Q4JXU4</accession>
<organism>
    <name type="scientific">Corynebacterium jeikeium (strain K411)</name>
    <dbReference type="NCBI Taxonomy" id="306537"/>
    <lineage>
        <taxon>Bacteria</taxon>
        <taxon>Bacillati</taxon>
        <taxon>Actinomycetota</taxon>
        <taxon>Actinomycetes</taxon>
        <taxon>Mycobacteriales</taxon>
        <taxon>Corynebacteriaceae</taxon>
        <taxon>Corynebacterium</taxon>
    </lineage>
</organism>
<sequence length="127" mass="13597">MTALPTDFLYSEEHEWVNTSAVVEGETVRVGITHIAAEALGDIVFVELPEVGSEVEAGEAFGEVESTKSVSDIYAPVSGEVVAVNEALEDNAGLINEDPYGEGWLYEVKVTEAGELMEAEAYQAANE</sequence>
<proteinExistence type="inferred from homology"/>
<feature type="chain" id="PRO_0000302368" description="Glycine cleavage system H protein">
    <location>
        <begin position="1"/>
        <end position="127"/>
    </location>
</feature>
<feature type="domain" description="Lipoyl-binding" evidence="2">
    <location>
        <begin position="27"/>
        <end position="109"/>
    </location>
</feature>
<feature type="modified residue" description="N6-lipoyllysine" evidence="1">
    <location>
        <position position="68"/>
    </location>
</feature>
<name>GCSH_CORJK</name>
<evidence type="ECO:0000255" key="1">
    <source>
        <dbReference type="HAMAP-Rule" id="MF_00272"/>
    </source>
</evidence>
<evidence type="ECO:0000255" key="2">
    <source>
        <dbReference type="PROSITE-ProRule" id="PRU01066"/>
    </source>
</evidence>
<comment type="function">
    <text evidence="1">The glycine cleavage system catalyzes the degradation of glycine. The H protein shuttles the methylamine group of glycine from the P protein to the T protein.</text>
</comment>
<comment type="cofactor">
    <cofactor evidence="1">
        <name>(R)-lipoate</name>
        <dbReference type="ChEBI" id="CHEBI:83088"/>
    </cofactor>
    <text evidence="1">Binds 1 lipoyl cofactor covalently.</text>
</comment>
<comment type="subunit">
    <text evidence="1">The glycine cleavage system is composed of four proteins: P, T, L and H.</text>
</comment>
<comment type="similarity">
    <text evidence="1">Belongs to the GcvH family.</text>
</comment>
<dbReference type="EMBL" id="CR931997">
    <property type="protein sequence ID" value="CAI36363.1"/>
    <property type="molecule type" value="Genomic_DNA"/>
</dbReference>
<dbReference type="RefSeq" id="WP_005297044.1">
    <property type="nucleotide sequence ID" value="NC_007164.1"/>
</dbReference>
<dbReference type="SMR" id="Q4JXU4"/>
<dbReference type="STRING" id="306537.jk0211"/>
<dbReference type="GeneID" id="92737699"/>
<dbReference type="KEGG" id="cjk:jk0211"/>
<dbReference type="eggNOG" id="COG0509">
    <property type="taxonomic scope" value="Bacteria"/>
</dbReference>
<dbReference type="HOGENOM" id="CLU_097408_2_2_11"/>
<dbReference type="OrthoDB" id="9796712at2"/>
<dbReference type="Proteomes" id="UP000000545">
    <property type="component" value="Chromosome"/>
</dbReference>
<dbReference type="GO" id="GO:0005829">
    <property type="term" value="C:cytosol"/>
    <property type="evidence" value="ECO:0007669"/>
    <property type="project" value="TreeGrafter"/>
</dbReference>
<dbReference type="GO" id="GO:0005960">
    <property type="term" value="C:glycine cleavage complex"/>
    <property type="evidence" value="ECO:0007669"/>
    <property type="project" value="InterPro"/>
</dbReference>
<dbReference type="GO" id="GO:0019464">
    <property type="term" value="P:glycine decarboxylation via glycine cleavage system"/>
    <property type="evidence" value="ECO:0007669"/>
    <property type="project" value="UniProtKB-UniRule"/>
</dbReference>
<dbReference type="CDD" id="cd06848">
    <property type="entry name" value="GCS_H"/>
    <property type="match status" value="1"/>
</dbReference>
<dbReference type="Gene3D" id="2.40.50.100">
    <property type="match status" value="1"/>
</dbReference>
<dbReference type="HAMAP" id="MF_00272">
    <property type="entry name" value="GcvH"/>
    <property type="match status" value="1"/>
</dbReference>
<dbReference type="InterPro" id="IPR003016">
    <property type="entry name" value="2-oxoA_DH_lipoyl-BS"/>
</dbReference>
<dbReference type="InterPro" id="IPR000089">
    <property type="entry name" value="Biotin_lipoyl"/>
</dbReference>
<dbReference type="InterPro" id="IPR002930">
    <property type="entry name" value="GCV_H"/>
</dbReference>
<dbReference type="InterPro" id="IPR033753">
    <property type="entry name" value="GCV_H/Fam206"/>
</dbReference>
<dbReference type="InterPro" id="IPR017453">
    <property type="entry name" value="GCV_H_sub"/>
</dbReference>
<dbReference type="InterPro" id="IPR011053">
    <property type="entry name" value="Single_hybrid_motif"/>
</dbReference>
<dbReference type="NCBIfam" id="TIGR00527">
    <property type="entry name" value="gcvH"/>
    <property type="match status" value="1"/>
</dbReference>
<dbReference type="NCBIfam" id="NF002270">
    <property type="entry name" value="PRK01202.1"/>
    <property type="match status" value="1"/>
</dbReference>
<dbReference type="PANTHER" id="PTHR11715">
    <property type="entry name" value="GLYCINE CLEAVAGE SYSTEM H PROTEIN"/>
    <property type="match status" value="1"/>
</dbReference>
<dbReference type="PANTHER" id="PTHR11715:SF3">
    <property type="entry name" value="GLYCINE CLEAVAGE SYSTEM H PROTEIN-RELATED"/>
    <property type="match status" value="1"/>
</dbReference>
<dbReference type="Pfam" id="PF01597">
    <property type="entry name" value="GCV_H"/>
    <property type="match status" value="1"/>
</dbReference>
<dbReference type="SUPFAM" id="SSF51230">
    <property type="entry name" value="Single hybrid motif"/>
    <property type="match status" value="1"/>
</dbReference>
<dbReference type="PROSITE" id="PS50968">
    <property type="entry name" value="BIOTINYL_LIPOYL"/>
    <property type="match status" value="1"/>
</dbReference>
<dbReference type="PROSITE" id="PS00189">
    <property type="entry name" value="LIPOYL"/>
    <property type="match status" value="1"/>
</dbReference>
<keyword id="KW-0450">Lipoyl</keyword>
<keyword id="KW-1185">Reference proteome</keyword>